<reference key="1">
    <citation type="submission" date="2007-11" db="EMBL/GenBank/DDBJ databases">
        <title>Complete genome sequence of Clostridium phytofermentans ISDg.</title>
        <authorList>
            <person name="Leschine S.B."/>
            <person name="Warnick T.A."/>
            <person name="Blanchard J.L."/>
            <person name="Schnell D.J."/>
            <person name="Petit E.L."/>
            <person name="LaTouf W.G."/>
            <person name="Copeland A."/>
            <person name="Lucas S."/>
            <person name="Lapidus A."/>
            <person name="Barry K."/>
            <person name="Glavina del Rio T."/>
            <person name="Dalin E."/>
            <person name="Tice H."/>
            <person name="Pitluck S."/>
            <person name="Kiss H."/>
            <person name="Brettin T."/>
            <person name="Bruce D."/>
            <person name="Detter J.C."/>
            <person name="Han C."/>
            <person name="Kuske C."/>
            <person name="Schmutz J."/>
            <person name="Larimer F."/>
            <person name="Land M."/>
            <person name="Hauser L."/>
            <person name="Kyrpides N."/>
            <person name="Kim E.A."/>
            <person name="Richardson P."/>
        </authorList>
    </citation>
    <scope>NUCLEOTIDE SEQUENCE [LARGE SCALE GENOMIC DNA]</scope>
    <source>
        <strain>ATCC 700394 / DSM 18823 / ISDg</strain>
    </source>
</reference>
<feature type="chain" id="PRO_0000355669" description="Large ribosomal subunit protein uL24">
    <location>
        <begin position="1"/>
        <end position="105"/>
    </location>
</feature>
<accession>A9KJI3</accession>
<comment type="function">
    <text evidence="1">One of two assembly initiator proteins, it binds directly to the 5'-end of the 23S rRNA, where it nucleates assembly of the 50S subunit.</text>
</comment>
<comment type="function">
    <text evidence="1">One of the proteins that surrounds the polypeptide exit tunnel on the outside of the subunit.</text>
</comment>
<comment type="subunit">
    <text evidence="1">Part of the 50S ribosomal subunit.</text>
</comment>
<comment type="similarity">
    <text evidence="1">Belongs to the universal ribosomal protein uL24 family.</text>
</comment>
<protein>
    <recommendedName>
        <fullName evidence="1">Large ribosomal subunit protein uL24</fullName>
    </recommendedName>
    <alternativeName>
        <fullName evidence="2">50S ribosomal protein L24</fullName>
    </alternativeName>
</protein>
<name>RL24_LACP7</name>
<sequence length="105" mass="11017">MATTKIKKGDSVKVIAGKDKGKEGKVISVSNGKVLVEGVNTITKHSKASQANPKGGIIHQEAPIDASNVMYVQKGKTTRIGFTTVDGKNGQKKVRVAKATGDIID</sequence>
<organism>
    <name type="scientific">Lachnoclostridium phytofermentans (strain ATCC 700394 / DSM 18823 / ISDg)</name>
    <name type="common">Clostridium phytofermentans</name>
    <dbReference type="NCBI Taxonomy" id="357809"/>
    <lineage>
        <taxon>Bacteria</taxon>
        <taxon>Bacillati</taxon>
        <taxon>Bacillota</taxon>
        <taxon>Clostridia</taxon>
        <taxon>Lachnospirales</taxon>
        <taxon>Lachnospiraceae</taxon>
    </lineage>
</organism>
<keyword id="KW-1185">Reference proteome</keyword>
<keyword id="KW-0687">Ribonucleoprotein</keyword>
<keyword id="KW-0689">Ribosomal protein</keyword>
<keyword id="KW-0694">RNA-binding</keyword>
<keyword id="KW-0699">rRNA-binding</keyword>
<dbReference type="EMBL" id="CP000885">
    <property type="protein sequence ID" value="ABX44003.1"/>
    <property type="molecule type" value="Genomic_DNA"/>
</dbReference>
<dbReference type="RefSeq" id="WP_012201651.1">
    <property type="nucleotide sequence ID" value="NC_010001.1"/>
</dbReference>
<dbReference type="SMR" id="A9KJI3"/>
<dbReference type="STRING" id="357809.Cphy_3656"/>
<dbReference type="KEGG" id="cpy:Cphy_3656"/>
<dbReference type="eggNOG" id="COG0198">
    <property type="taxonomic scope" value="Bacteria"/>
</dbReference>
<dbReference type="HOGENOM" id="CLU_093315_2_2_9"/>
<dbReference type="OrthoDB" id="9807419at2"/>
<dbReference type="Proteomes" id="UP000000370">
    <property type="component" value="Chromosome"/>
</dbReference>
<dbReference type="GO" id="GO:1990904">
    <property type="term" value="C:ribonucleoprotein complex"/>
    <property type="evidence" value="ECO:0007669"/>
    <property type="project" value="UniProtKB-KW"/>
</dbReference>
<dbReference type="GO" id="GO:0005840">
    <property type="term" value="C:ribosome"/>
    <property type="evidence" value="ECO:0007669"/>
    <property type="project" value="UniProtKB-KW"/>
</dbReference>
<dbReference type="GO" id="GO:0019843">
    <property type="term" value="F:rRNA binding"/>
    <property type="evidence" value="ECO:0007669"/>
    <property type="project" value="UniProtKB-UniRule"/>
</dbReference>
<dbReference type="GO" id="GO:0003735">
    <property type="term" value="F:structural constituent of ribosome"/>
    <property type="evidence" value="ECO:0007669"/>
    <property type="project" value="InterPro"/>
</dbReference>
<dbReference type="GO" id="GO:0006412">
    <property type="term" value="P:translation"/>
    <property type="evidence" value="ECO:0007669"/>
    <property type="project" value="UniProtKB-UniRule"/>
</dbReference>
<dbReference type="CDD" id="cd06089">
    <property type="entry name" value="KOW_RPL26"/>
    <property type="match status" value="1"/>
</dbReference>
<dbReference type="Gene3D" id="2.30.30.30">
    <property type="match status" value="1"/>
</dbReference>
<dbReference type="HAMAP" id="MF_01326_B">
    <property type="entry name" value="Ribosomal_uL24_B"/>
    <property type="match status" value="1"/>
</dbReference>
<dbReference type="InterPro" id="IPR005824">
    <property type="entry name" value="KOW"/>
</dbReference>
<dbReference type="InterPro" id="IPR014722">
    <property type="entry name" value="Rib_uL2_dom2"/>
</dbReference>
<dbReference type="InterPro" id="IPR003256">
    <property type="entry name" value="Ribosomal_uL24"/>
</dbReference>
<dbReference type="InterPro" id="IPR005825">
    <property type="entry name" value="Ribosomal_uL24_CS"/>
</dbReference>
<dbReference type="InterPro" id="IPR041988">
    <property type="entry name" value="Ribosomal_uL24_KOW"/>
</dbReference>
<dbReference type="InterPro" id="IPR008991">
    <property type="entry name" value="Translation_prot_SH3-like_sf"/>
</dbReference>
<dbReference type="NCBIfam" id="TIGR01079">
    <property type="entry name" value="rplX_bact"/>
    <property type="match status" value="1"/>
</dbReference>
<dbReference type="PANTHER" id="PTHR12903">
    <property type="entry name" value="MITOCHONDRIAL RIBOSOMAL PROTEIN L24"/>
    <property type="match status" value="1"/>
</dbReference>
<dbReference type="Pfam" id="PF00467">
    <property type="entry name" value="KOW"/>
    <property type="match status" value="1"/>
</dbReference>
<dbReference type="Pfam" id="PF17136">
    <property type="entry name" value="ribosomal_L24"/>
    <property type="match status" value="1"/>
</dbReference>
<dbReference type="SMART" id="SM00739">
    <property type="entry name" value="KOW"/>
    <property type="match status" value="1"/>
</dbReference>
<dbReference type="SUPFAM" id="SSF50104">
    <property type="entry name" value="Translation proteins SH3-like domain"/>
    <property type="match status" value="1"/>
</dbReference>
<dbReference type="PROSITE" id="PS01108">
    <property type="entry name" value="RIBOSOMAL_L24"/>
    <property type="match status" value="1"/>
</dbReference>
<proteinExistence type="inferred from homology"/>
<evidence type="ECO:0000255" key="1">
    <source>
        <dbReference type="HAMAP-Rule" id="MF_01326"/>
    </source>
</evidence>
<evidence type="ECO:0000305" key="2"/>
<gene>
    <name evidence="1" type="primary">rplX</name>
    <name type="ordered locus">Cphy_3656</name>
</gene>